<organism>
    <name type="scientific">Amphiuma means</name>
    <name type="common">Salamander</name>
    <name type="synonym">Two-toed amphiuma</name>
    <dbReference type="NCBI Taxonomy" id="8312"/>
    <lineage>
        <taxon>Eukaryota</taxon>
        <taxon>Metazoa</taxon>
        <taxon>Chordata</taxon>
        <taxon>Craniata</taxon>
        <taxon>Vertebrata</taxon>
        <taxon>Euteleostomi</taxon>
        <taxon>Amphibia</taxon>
        <taxon>Batrachia</taxon>
        <taxon>Caudata</taxon>
        <taxon>Salamandroidea</taxon>
        <taxon>Amphiumidae</taxon>
        <taxon>Amphiuma</taxon>
    </lineage>
</organism>
<accession>P02616</accession>
<evidence type="ECO:0000250" key="1"/>
<evidence type="ECO:0000250" key="2">
    <source>
        <dbReference type="UniProtKB" id="P02621"/>
    </source>
</evidence>
<evidence type="ECO:0000255" key="3">
    <source>
        <dbReference type="PROSITE-ProRule" id="PRU00448"/>
    </source>
</evidence>
<evidence type="ECO:0000305" key="4"/>
<proteinExistence type="evidence at protein level"/>
<keyword id="KW-0106">Calcium</keyword>
<keyword id="KW-0903">Direct protein sequencing</keyword>
<keyword id="KW-0479">Metal-binding</keyword>
<keyword id="KW-0514">Muscle protein</keyword>
<keyword id="KW-0677">Repeat</keyword>
<sequence length="108" mass="11741">AITDILSAKDIEAALSSVKAAESFNYKTFFTKCGLAGKPTDQVKKVFDILDQDKSGYIEEDELQLFLKNFCSSARSLSNAETKAFLFAGDSDGDGKIGVDEFQALVRS</sequence>
<comment type="function">
    <text evidence="1">In muscle, parvalbumin is thought to be involved in relaxation after contraction. It binds two calcium ions (By similarity).</text>
</comment>
<comment type="similarity">
    <text evidence="4">Belongs to the parvalbumin family.</text>
</comment>
<feature type="chain" id="PRO_0000073603" description="Parvalbumin beta">
    <location>
        <begin position="1"/>
        <end position="108"/>
    </location>
</feature>
<feature type="domain" description="EF-hand 1" evidence="3">
    <location>
        <begin position="38"/>
        <end position="73"/>
    </location>
</feature>
<feature type="domain" description="EF-hand 2" evidence="3">
    <location>
        <begin position="77"/>
        <end position="108"/>
    </location>
</feature>
<feature type="binding site" evidence="3">
    <location>
        <position position="51"/>
    </location>
    <ligand>
        <name>Ca(2+)</name>
        <dbReference type="ChEBI" id="CHEBI:29108"/>
        <label>1</label>
    </ligand>
</feature>
<feature type="binding site" evidence="3">
    <location>
        <position position="53"/>
    </location>
    <ligand>
        <name>Ca(2+)</name>
        <dbReference type="ChEBI" id="CHEBI:29108"/>
        <label>1</label>
    </ligand>
</feature>
<feature type="binding site" evidence="3">
    <location>
        <position position="55"/>
    </location>
    <ligand>
        <name>Ca(2+)</name>
        <dbReference type="ChEBI" id="CHEBI:29108"/>
        <label>1</label>
    </ligand>
</feature>
<feature type="binding site" evidence="3">
    <location>
        <position position="57"/>
    </location>
    <ligand>
        <name>Ca(2+)</name>
        <dbReference type="ChEBI" id="CHEBI:29108"/>
        <label>1</label>
    </ligand>
</feature>
<feature type="binding site" evidence="2">
    <location>
        <position position="59"/>
    </location>
    <ligand>
        <name>Ca(2+)</name>
        <dbReference type="ChEBI" id="CHEBI:29108"/>
        <label>1</label>
    </ligand>
</feature>
<feature type="binding site" evidence="3">
    <location>
        <position position="62"/>
    </location>
    <ligand>
        <name>Ca(2+)</name>
        <dbReference type="ChEBI" id="CHEBI:29108"/>
        <label>1</label>
    </ligand>
</feature>
<feature type="binding site" evidence="3">
    <location>
        <position position="90"/>
    </location>
    <ligand>
        <name>Ca(2+)</name>
        <dbReference type="ChEBI" id="CHEBI:29108"/>
        <label>2</label>
    </ligand>
</feature>
<feature type="binding site" evidence="3">
    <location>
        <position position="92"/>
    </location>
    <ligand>
        <name>Ca(2+)</name>
        <dbReference type="ChEBI" id="CHEBI:29108"/>
        <label>2</label>
    </ligand>
</feature>
<feature type="binding site" evidence="3">
    <location>
        <position position="94"/>
    </location>
    <ligand>
        <name>Ca(2+)</name>
        <dbReference type="ChEBI" id="CHEBI:29108"/>
        <label>2</label>
    </ligand>
</feature>
<feature type="binding site" evidence="3">
    <location>
        <position position="96"/>
    </location>
    <ligand>
        <name>Ca(2+)</name>
        <dbReference type="ChEBI" id="CHEBI:29108"/>
        <label>2</label>
    </ligand>
</feature>
<feature type="binding site" evidence="3">
    <location>
        <position position="101"/>
    </location>
    <ligand>
        <name>Ca(2+)</name>
        <dbReference type="ChEBI" id="CHEBI:29108"/>
        <label>2</label>
    </ligand>
</feature>
<dbReference type="PIR" id="A03051">
    <property type="entry name" value="PVNESB"/>
</dbReference>
<dbReference type="SMR" id="P02616"/>
<dbReference type="GO" id="GO:0005737">
    <property type="term" value="C:cytoplasm"/>
    <property type="evidence" value="ECO:0007669"/>
    <property type="project" value="TreeGrafter"/>
</dbReference>
<dbReference type="GO" id="GO:0005509">
    <property type="term" value="F:calcium ion binding"/>
    <property type="evidence" value="ECO:0007669"/>
    <property type="project" value="InterPro"/>
</dbReference>
<dbReference type="CDD" id="cd16255">
    <property type="entry name" value="EFh_parvalbumin_beta"/>
    <property type="match status" value="1"/>
</dbReference>
<dbReference type="FunFam" id="1.10.238.10:FF:000060">
    <property type="entry name" value="Parvalbumin, thymic"/>
    <property type="match status" value="1"/>
</dbReference>
<dbReference type="Gene3D" id="1.10.238.10">
    <property type="entry name" value="EF-hand"/>
    <property type="match status" value="1"/>
</dbReference>
<dbReference type="InterPro" id="IPR011992">
    <property type="entry name" value="EF-hand-dom_pair"/>
</dbReference>
<dbReference type="InterPro" id="IPR018247">
    <property type="entry name" value="EF_Hand_1_Ca_BS"/>
</dbReference>
<dbReference type="InterPro" id="IPR002048">
    <property type="entry name" value="EF_hand_dom"/>
</dbReference>
<dbReference type="InterPro" id="IPR008080">
    <property type="entry name" value="Parvalbumin"/>
</dbReference>
<dbReference type="PANTHER" id="PTHR11653">
    <property type="entry name" value="PARVALBUMIN ALPHA"/>
    <property type="match status" value="1"/>
</dbReference>
<dbReference type="PANTHER" id="PTHR11653:SF3">
    <property type="entry name" value="PARVALBUMIN, THYMIC"/>
    <property type="match status" value="1"/>
</dbReference>
<dbReference type="Pfam" id="PF13499">
    <property type="entry name" value="EF-hand_7"/>
    <property type="match status" value="1"/>
</dbReference>
<dbReference type="PRINTS" id="PR01697">
    <property type="entry name" value="PARVALBUMIN"/>
</dbReference>
<dbReference type="SMART" id="SM00054">
    <property type="entry name" value="EFh"/>
    <property type="match status" value="2"/>
</dbReference>
<dbReference type="SUPFAM" id="SSF47473">
    <property type="entry name" value="EF-hand"/>
    <property type="match status" value="1"/>
</dbReference>
<dbReference type="PROSITE" id="PS00018">
    <property type="entry name" value="EF_HAND_1"/>
    <property type="match status" value="2"/>
</dbReference>
<dbReference type="PROSITE" id="PS50222">
    <property type="entry name" value="EF_HAND_2"/>
    <property type="match status" value="2"/>
</dbReference>
<protein>
    <recommendedName>
        <fullName>Parvalbumin beta</fullName>
    </recommendedName>
</protein>
<reference key="1">
    <citation type="journal article" date="1984" name="Mol. Biol. Evol.">
        <title>Amino acid sequences of lower vertebrate parvalbumins and their evolution: parvalbumins of boa, turtle, and salamander.</title>
        <authorList>
            <person name="Maeda N."/>
            <person name="Zhu D."/>
            <person name="Fitch W.M."/>
        </authorList>
    </citation>
    <scope>PROTEIN SEQUENCE</scope>
</reference>
<name>PRVB_AMPME</name>